<dbReference type="EMBL" id="CP001341">
    <property type="protein sequence ID" value="ACL40596.1"/>
    <property type="molecule type" value="Genomic_DNA"/>
</dbReference>
<dbReference type="RefSeq" id="WP_015937805.1">
    <property type="nucleotide sequence ID" value="NC_011886.1"/>
</dbReference>
<dbReference type="SMR" id="B8HCI0"/>
<dbReference type="STRING" id="452863.Achl_2631"/>
<dbReference type="KEGG" id="ach:Achl_2631"/>
<dbReference type="eggNOG" id="COG0102">
    <property type="taxonomic scope" value="Bacteria"/>
</dbReference>
<dbReference type="HOGENOM" id="CLU_082184_2_2_11"/>
<dbReference type="OrthoDB" id="9801330at2"/>
<dbReference type="Proteomes" id="UP000002505">
    <property type="component" value="Chromosome"/>
</dbReference>
<dbReference type="GO" id="GO:0022625">
    <property type="term" value="C:cytosolic large ribosomal subunit"/>
    <property type="evidence" value="ECO:0007669"/>
    <property type="project" value="TreeGrafter"/>
</dbReference>
<dbReference type="GO" id="GO:0003729">
    <property type="term" value="F:mRNA binding"/>
    <property type="evidence" value="ECO:0007669"/>
    <property type="project" value="TreeGrafter"/>
</dbReference>
<dbReference type="GO" id="GO:0003735">
    <property type="term" value="F:structural constituent of ribosome"/>
    <property type="evidence" value="ECO:0007669"/>
    <property type="project" value="InterPro"/>
</dbReference>
<dbReference type="GO" id="GO:0017148">
    <property type="term" value="P:negative regulation of translation"/>
    <property type="evidence" value="ECO:0007669"/>
    <property type="project" value="TreeGrafter"/>
</dbReference>
<dbReference type="GO" id="GO:0006412">
    <property type="term" value="P:translation"/>
    <property type="evidence" value="ECO:0007669"/>
    <property type="project" value="UniProtKB-UniRule"/>
</dbReference>
<dbReference type="CDD" id="cd00392">
    <property type="entry name" value="Ribosomal_L13"/>
    <property type="match status" value="1"/>
</dbReference>
<dbReference type="FunFam" id="3.90.1180.10:FF:000001">
    <property type="entry name" value="50S ribosomal protein L13"/>
    <property type="match status" value="1"/>
</dbReference>
<dbReference type="Gene3D" id="3.90.1180.10">
    <property type="entry name" value="Ribosomal protein L13"/>
    <property type="match status" value="1"/>
</dbReference>
<dbReference type="HAMAP" id="MF_01366">
    <property type="entry name" value="Ribosomal_uL13"/>
    <property type="match status" value="1"/>
</dbReference>
<dbReference type="InterPro" id="IPR005822">
    <property type="entry name" value="Ribosomal_uL13"/>
</dbReference>
<dbReference type="InterPro" id="IPR005823">
    <property type="entry name" value="Ribosomal_uL13_bac-type"/>
</dbReference>
<dbReference type="InterPro" id="IPR036899">
    <property type="entry name" value="Ribosomal_uL13_sf"/>
</dbReference>
<dbReference type="NCBIfam" id="TIGR01066">
    <property type="entry name" value="rplM_bact"/>
    <property type="match status" value="1"/>
</dbReference>
<dbReference type="PANTHER" id="PTHR11545:SF2">
    <property type="entry name" value="LARGE RIBOSOMAL SUBUNIT PROTEIN UL13M"/>
    <property type="match status" value="1"/>
</dbReference>
<dbReference type="PANTHER" id="PTHR11545">
    <property type="entry name" value="RIBOSOMAL PROTEIN L13"/>
    <property type="match status" value="1"/>
</dbReference>
<dbReference type="Pfam" id="PF00572">
    <property type="entry name" value="Ribosomal_L13"/>
    <property type="match status" value="1"/>
</dbReference>
<dbReference type="PIRSF" id="PIRSF002181">
    <property type="entry name" value="Ribosomal_L13"/>
    <property type="match status" value="1"/>
</dbReference>
<dbReference type="SUPFAM" id="SSF52161">
    <property type="entry name" value="Ribosomal protein L13"/>
    <property type="match status" value="1"/>
</dbReference>
<organism>
    <name type="scientific">Pseudarthrobacter chlorophenolicus (strain ATCC 700700 / DSM 12829 / CIP 107037 / JCM 12360 / KCTC 9906 / NCIMB 13794 / A6)</name>
    <name type="common">Arthrobacter chlorophenolicus</name>
    <dbReference type="NCBI Taxonomy" id="452863"/>
    <lineage>
        <taxon>Bacteria</taxon>
        <taxon>Bacillati</taxon>
        <taxon>Actinomycetota</taxon>
        <taxon>Actinomycetes</taxon>
        <taxon>Micrococcales</taxon>
        <taxon>Micrococcaceae</taxon>
        <taxon>Pseudarthrobacter</taxon>
    </lineage>
</organism>
<gene>
    <name evidence="1" type="primary">rplM</name>
    <name type="ordered locus">Achl_2631</name>
</gene>
<keyword id="KW-0687">Ribonucleoprotein</keyword>
<keyword id="KW-0689">Ribosomal protein</keyword>
<protein>
    <recommendedName>
        <fullName evidence="1">Large ribosomal subunit protein uL13</fullName>
    </recommendedName>
    <alternativeName>
        <fullName evidence="2">50S ribosomal protein L13</fullName>
    </alternativeName>
</protein>
<name>RL13_PSECP</name>
<reference key="1">
    <citation type="submission" date="2009-01" db="EMBL/GenBank/DDBJ databases">
        <title>Complete sequence of chromosome of Arthrobacter chlorophenolicus A6.</title>
        <authorList>
            <consortium name="US DOE Joint Genome Institute"/>
            <person name="Lucas S."/>
            <person name="Copeland A."/>
            <person name="Lapidus A."/>
            <person name="Glavina del Rio T."/>
            <person name="Tice H."/>
            <person name="Bruce D."/>
            <person name="Goodwin L."/>
            <person name="Pitluck S."/>
            <person name="Goltsman E."/>
            <person name="Clum A."/>
            <person name="Larimer F."/>
            <person name="Land M."/>
            <person name="Hauser L."/>
            <person name="Kyrpides N."/>
            <person name="Mikhailova N."/>
            <person name="Jansson J."/>
            <person name="Richardson P."/>
        </authorList>
    </citation>
    <scope>NUCLEOTIDE SEQUENCE [LARGE SCALE GENOMIC DNA]</scope>
    <source>
        <strain>ATCC 700700 / DSM 12829 / CIP 107037 / JCM 12360 / KCTC 9906 / NCIMB 13794 / A6</strain>
    </source>
</reference>
<feature type="chain" id="PRO_1000166846" description="Large ribosomal subunit protein uL13">
    <location>
        <begin position="1"/>
        <end position="147"/>
    </location>
</feature>
<accession>B8HCI0</accession>
<sequence>MRTYTPKPGDINRQWHVIDATDVVLGRLASQTAILLRGKHKATFASHMDMGDFVIIINAEKVALTGAKLEQKRAYRHSGYPGGLTSVNYAELLESNPVRAVEKAIKGMLPKNSLAAQQLGKLKVYRGAEHPHAAQQPKTFEITQVAQ</sequence>
<proteinExistence type="inferred from homology"/>
<evidence type="ECO:0000255" key="1">
    <source>
        <dbReference type="HAMAP-Rule" id="MF_01366"/>
    </source>
</evidence>
<evidence type="ECO:0000305" key="2"/>
<comment type="function">
    <text evidence="1">This protein is one of the early assembly proteins of the 50S ribosomal subunit, although it is not seen to bind rRNA by itself. It is important during the early stages of 50S assembly.</text>
</comment>
<comment type="subunit">
    <text evidence="1">Part of the 50S ribosomal subunit.</text>
</comment>
<comment type="similarity">
    <text evidence="1">Belongs to the universal ribosomal protein uL13 family.</text>
</comment>